<organism>
    <name type="scientific">Aspergillus oryzae (strain ATCC 42149 / RIB 40)</name>
    <name type="common">Yellow koji mold</name>
    <dbReference type="NCBI Taxonomy" id="510516"/>
    <lineage>
        <taxon>Eukaryota</taxon>
        <taxon>Fungi</taxon>
        <taxon>Dikarya</taxon>
        <taxon>Ascomycota</taxon>
        <taxon>Pezizomycotina</taxon>
        <taxon>Eurotiomycetes</taxon>
        <taxon>Eurotiomycetidae</taxon>
        <taxon>Eurotiales</taxon>
        <taxon>Aspergillaceae</taxon>
        <taxon>Aspergillus</taxon>
        <taxon>Aspergillus subgen. Circumdati</taxon>
    </lineage>
</organism>
<protein>
    <recommendedName>
        <fullName>Serine/threonine-protein phosphatase 2A activator 1</fullName>
        <ecNumber>5.2.1.8</ecNumber>
    </recommendedName>
    <alternativeName>
        <fullName>Peptidyl-prolyl cis-trans isomerase PTPA-1</fullName>
        <shortName>PPIase PTPA-1</shortName>
        <shortName>Rotamase PTPA-1</shortName>
    </alternativeName>
    <alternativeName>
        <fullName>Phosphotyrosyl phosphatase activator 1</fullName>
    </alternativeName>
</protein>
<keyword id="KW-0963">Cytoplasm</keyword>
<keyword id="KW-0413">Isomerase</keyword>
<keyword id="KW-0539">Nucleus</keyword>
<keyword id="KW-1185">Reference proteome</keyword>
<keyword id="KW-0697">Rotamase</keyword>
<accession>Q2UN27</accession>
<evidence type="ECO:0000250" key="1"/>
<evidence type="ECO:0000256" key="2">
    <source>
        <dbReference type="SAM" id="MobiDB-lite"/>
    </source>
</evidence>
<evidence type="ECO:0000305" key="3"/>
<name>PTPA1_ASPOR</name>
<proteinExistence type="inferred from homology"/>
<reference key="1">
    <citation type="journal article" date="2005" name="Nature">
        <title>Genome sequencing and analysis of Aspergillus oryzae.</title>
        <authorList>
            <person name="Machida M."/>
            <person name="Asai K."/>
            <person name="Sano M."/>
            <person name="Tanaka T."/>
            <person name="Kumagai T."/>
            <person name="Terai G."/>
            <person name="Kusumoto K."/>
            <person name="Arima T."/>
            <person name="Akita O."/>
            <person name="Kashiwagi Y."/>
            <person name="Abe K."/>
            <person name="Gomi K."/>
            <person name="Horiuchi H."/>
            <person name="Kitamoto K."/>
            <person name="Kobayashi T."/>
            <person name="Takeuchi M."/>
            <person name="Denning D.W."/>
            <person name="Galagan J.E."/>
            <person name="Nierman W.C."/>
            <person name="Yu J."/>
            <person name="Archer D.B."/>
            <person name="Bennett J.W."/>
            <person name="Bhatnagar D."/>
            <person name="Cleveland T.E."/>
            <person name="Fedorova N.D."/>
            <person name="Gotoh O."/>
            <person name="Horikawa H."/>
            <person name="Hosoyama A."/>
            <person name="Ichinomiya M."/>
            <person name="Igarashi R."/>
            <person name="Iwashita K."/>
            <person name="Juvvadi P.R."/>
            <person name="Kato M."/>
            <person name="Kato Y."/>
            <person name="Kin T."/>
            <person name="Kokubun A."/>
            <person name="Maeda H."/>
            <person name="Maeyama N."/>
            <person name="Maruyama J."/>
            <person name="Nagasaki H."/>
            <person name="Nakajima T."/>
            <person name="Oda K."/>
            <person name="Okada K."/>
            <person name="Paulsen I."/>
            <person name="Sakamoto K."/>
            <person name="Sawano T."/>
            <person name="Takahashi M."/>
            <person name="Takase K."/>
            <person name="Terabayashi Y."/>
            <person name="Wortman J.R."/>
            <person name="Yamada O."/>
            <person name="Yamagata Y."/>
            <person name="Anazawa H."/>
            <person name="Hata Y."/>
            <person name="Koide Y."/>
            <person name="Komori T."/>
            <person name="Koyama Y."/>
            <person name="Minetoki T."/>
            <person name="Suharnan S."/>
            <person name="Tanaka A."/>
            <person name="Isono K."/>
            <person name="Kuhara S."/>
            <person name="Ogasawara N."/>
            <person name="Kikuchi H."/>
        </authorList>
    </citation>
    <scope>NUCLEOTIDE SEQUENCE [LARGE SCALE GENOMIC DNA]</scope>
    <source>
        <strain>ATCC 42149 / RIB 40</strain>
    </source>
</reference>
<sequence length="478" mass="52116">MAADGLPVRVLPTLDPSEGHTFLEPSKRINEGDDVSEFLCSKAYVDIMTFLLQLNRSMFPAKLPDGRVQTWPLNTEAVGFSAPVRQLQQLLSKIEDLLDATPLMPGEWRYANGAFQVWHDKVKKATPSLLAECLPAEILHAPSSDPNGPTAEVELTEYFLGSWGSRERMDYGTGHELSFLTFLGAIWKLNGFPKNEPGVEERTIVLGVIEPYLELIRAVIKKYKLEPAGSHGVWGLDDHSFIPYIFGSAQLGPAISNSDLVPETGSLPDAVDPDGVTKANVVEKERKVNMYFSAIGFINDVKKGPFWEHSQMLYNISGVQAGWAKINKGMIKMYNAEVLSKFPVVQHFRFGSLFSWNRDPSAIPPPSRIHTSSGPETRPRQVPPSARQDPGPGTKAPWATASQSTPPPSTGTAAPWATSRAGREPPTTSRIPSALPDTSRLPPGPMAPTRAPWASSQPAGPAPTGDPNDITTKAPWAK</sequence>
<comment type="function">
    <text evidence="1">PPIases accelerate the folding of proteins. It catalyzes the cis-trans isomerization of proline imidic peptide bonds in oligopeptides. Acts as a regulatory subunit for PP2A-like phosphatases modulating their activity or substrate specificity, probably by inducing a conformational change in the catalytic subunit, a direct target of the PPIase. Can reactivate inactive phosphatase PP2A-phosphatase methylesterase complexes (PP2Ai) in presence of ATP and Mg(2+) by dissociating the inactive form from the complex (By similarity).</text>
</comment>
<comment type="catalytic activity">
    <reaction>
        <text>[protein]-peptidylproline (omega=180) = [protein]-peptidylproline (omega=0)</text>
        <dbReference type="Rhea" id="RHEA:16237"/>
        <dbReference type="Rhea" id="RHEA-COMP:10747"/>
        <dbReference type="Rhea" id="RHEA-COMP:10748"/>
        <dbReference type="ChEBI" id="CHEBI:83833"/>
        <dbReference type="ChEBI" id="CHEBI:83834"/>
        <dbReference type="EC" id="5.2.1.8"/>
    </reaction>
</comment>
<comment type="subcellular location">
    <subcellularLocation>
        <location evidence="1">Cytoplasm</location>
    </subcellularLocation>
    <subcellularLocation>
        <location evidence="1">Nucleus</location>
    </subcellularLocation>
</comment>
<comment type="similarity">
    <text evidence="3">Belongs to the PTPA-type PPIase family.</text>
</comment>
<gene>
    <name type="primary">rrd1</name>
    <name type="ORF">AO090001000529</name>
</gene>
<dbReference type="EC" id="5.2.1.8"/>
<dbReference type="EMBL" id="BA000050">
    <property type="protein sequence ID" value="BAE57038.1"/>
    <property type="molecule type" value="Genomic_DNA"/>
</dbReference>
<dbReference type="RefSeq" id="XP_001819040.1">
    <property type="nucleotide sequence ID" value="XM_001818988.1"/>
</dbReference>
<dbReference type="SMR" id="Q2UN27"/>
<dbReference type="STRING" id="510516.Q2UN27"/>
<dbReference type="EnsemblFungi" id="BAE57038">
    <property type="protein sequence ID" value="BAE57038"/>
    <property type="gene ID" value="AO090001000529"/>
</dbReference>
<dbReference type="GeneID" id="5991011"/>
<dbReference type="KEGG" id="aor:AO090001000529"/>
<dbReference type="VEuPathDB" id="FungiDB:AO090001000529"/>
<dbReference type="HOGENOM" id="CLU_030733_2_0_1"/>
<dbReference type="OMA" id="IHESQDV"/>
<dbReference type="OrthoDB" id="103416at5052"/>
<dbReference type="Proteomes" id="UP000006564">
    <property type="component" value="Chromosome 2"/>
</dbReference>
<dbReference type="GO" id="GO:0005737">
    <property type="term" value="C:cytoplasm"/>
    <property type="evidence" value="ECO:0007669"/>
    <property type="project" value="UniProtKB-SubCell"/>
</dbReference>
<dbReference type="GO" id="GO:0005634">
    <property type="term" value="C:nucleus"/>
    <property type="evidence" value="ECO:0007669"/>
    <property type="project" value="UniProtKB-SubCell"/>
</dbReference>
<dbReference type="GO" id="GO:0000159">
    <property type="term" value="C:protein phosphatase type 2A complex"/>
    <property type="evidence" value="ECO:0007669"/>
    <property type="project" value="TreeGrafter"/>
</dbReference>
<dbReference type="GO" id="GO:0003755">
    <property type="term" value="F:peptidyl-prolyl cis-trans isomerase activity"/>
    <property type="evidence" value="ECO:0007669"/>
    <property type="project" value="UniProtKB-KW"/>
</dbReference>
<dbReference type="GO" id="GO:0008160">
    <property type="term" value="F:protein tyrosine phosphatase activator activity"/>
    <property type="evidence" value="ECO:0007669"/>
    <property type="project" value="TreeGrafter"/>
</dbReference>
<dbReference type="GO" id="GO:0007052">
    <property type="term" value="P:mitotic spindle organization"/>
    <property type="evidence" value="ECO:0007669"/>
    <property type="project" value="TreeGrafter"/>
</dbReference>
<dbReference type="CDD" id="cd04087">
    <property type="entry name" value="PTPA"/>
    <property type="match status" value="1"/>
</dbReference>
<dbReference type="FunFam" id="1.20.120.1150:FF:000003">
    <property type="entry name" value="Serine/threonine-protein phosphatase 2A activator"/>
    <property type="match status" value="1"/>
</dbReference>
<dbReference type="Gene3D" id="1.20.120.1150">
    <property type="match status" value="1"/>
</dbReference>
<dbReference type="InterPro" id="IPR004327">
    <property type="entry name" value="Phstyr_phstse_ac"/>
</dbReference>
<dbReference type="InterPro" id="IPR043170">
    <property type="entry name" value="PTPA_C_lid"/>
</dbReference>
<dbReference type="InterPro" id="IPR037218">
    <property type="entry name" value="PTPA_sf"/>
</dbReference>
<dbReference type="PANTHER" id="PTHR10012">
    <property type="entry name" value="SERINE/THREONINE-PROTEIN PHOSPHATASE 2A REGULATORY SUBUNIT B"/>
    <property type="match status" value="1"/>
</dbReference>
<dbReference type="PANTHER" id="PTHR10012:SF3">
    <property type="entry name" value="SERINE_THREONINE-PROTEIN PHOSPHATASE 2A ACTIVATOR 1"/>
    <property type="match status" value="1"/>
</dbReference>
<dbReference type="Pfam" id="PF03095">
    <property type="entry name" value="PTPA"/>
    <property type="match status" value="1"/>
</dbReference>
<dbReference type="SUPFAM" id="SSF140984">
    <property type="entry name" value="PTPA-like"/>
    <property type="match status" value="1"/>
</dbReference>
<feature type="chain" id="PRO_0000226094" description="Serine/threonine-protein phosphatase 2A activator 1">
    <location>
        <begin position="1"/>
        <end position="478"/>
    </location>
</feature>
<feature type="region of interest" description="Disordered" evidence="2">
    <location>
        <begin position="359"/>
        <end position="478"/>
    </location>
</feature>
<feature type="compositionally biased region" description="Low complexity" evidence="2">
    <location>
        <begin position="396"/>
        <end position="419"/>
    </location>
</feature>